<reference key="1">
    <citation type="journal article" date="2001" name="Nature">
        <title>Genome sequence of Yersinia pestis, the causative agent of plague.</title>
        <authorList>
            <person name="Parkhill J."/>
            <person name="Wren B.W."/>
            <person name="Thomson N.R."/>
            <person name="Titball R.W."/>
            <person name="Holden M.T.G."/>
            <person name="Prentice M.B."/>
            <person name="Sebaihia M."/>
            <person name="James K.D."/>
            <person name="Churcher C.M."/>
            <person name="Mungall K.L."/>
            <person name="Baker S."/>
            <person name="Basham D."/>
            <person name="Bentley S.D."/>
            <person name="Brooks K."/>
            <person name="Cerdeno-Tarraga A.-M."/>
            <person name="Chillingworth T."/>
            <person name="Cronin A."/>
            <person name="Davies R.M."/>
            <person name="Davis P."/>
            <person name="Dougan G."/>
            <person name="Feltwell T."/>
            <person name="Hamlin N."/>
            <person name="Holroyd S."/>
            <person name="Jagels K."/>
            <person name="Karlyshev A.V."/>
            <person name="Leather S."/>
            <person name="Moule S."/>
            <person name="Oyston P.C.F."/>
            <person name="Quail M.A."/>
            <person name="Rutherford K.M."/>
            <person name="Simmonds M."/>
            <person name="Skelton J."/>
            <person name="Stevens K."/>
            <person name="Whitehead S."/>
            <person name="Barrell B.G."/>
        </authorList>
    </citation>
    <scope>NUCLEOTIDE SEQUENCE [LARGE SCALE GENOMIC DNA]</scope>
    <source>
        <strain>CO-92 / Biovar Orientalis</strain>
    </source>
</reference>
<reference key="2">
    <citation type="journal article" date="2002" name="J. Bacteriol.">
        <title>Genome sequence of Yersinia pestis KIM.</title>
        <authorList>
            <person name="Deng W."/>
            <person name="Burland V."/>
            <person name="Plunkett G. III"/>
            <person name="Boutin A."/>
            <person name="Mayhew G.F."/>
            <person name="Liss P."/>
            <person name="Perna N.T."/>
            <person name="Rose D.J."/>
            <person name="Mau B."/>
            <person name="Zhou S."/>
            <person name="Schwartz D.C."/>
            <person name="Fetherston J.D."/>
            <person name="Lindler L.E."/>
            <person name="Brubaker R.R."/>
            <person name="Plano G.V."/>
            <person name="Straley S.C."/>
            <person name="McDonough K.A."/>
            <person name="Nilles M.L."/>
            <person name="Matson J.S."/>
            <person name="Blattner F.R."/>
            <person name="Perry R.D."/>
        </authorList>
    </citation>
    <scope>NUCLEOTIDE SEQUENCE [LARGE SCALE GENOMIC DNA]</scope>
    <source>
        <strain>KIM10+ / Biovar Mediaevalis</strain>
    </source>
</reference>
<reference key="3">
    <citation type="journal article" date="2004" name="DNA Res.">
        <title>Complete genome sequence of Yersinia pestis strain 91001, an isolate avirulent to humans.</title>
        <authorList>
            <person name="Song Y."/>
            <person name="Tong Z."/>
            <person name="Wang J."/>
            <person name="Wang L."/>
            <person name="Guo Z."/>
            <person name="Han Y."/>
            <person name="Zhang J."/>
            <person name="Pei D."/>
            <person name="Zhou D."/>
            <person name="Qin H."/>
            <person name="Pang X."/>
            <person name="Han Y."/>
            <person name="Zhai J."/>
            <person name="Li M."/>
            <person name="Cui B."/>
            <person name="Qi Z."/>
            <person name="Jin L."/>
            <person name="Dai R."/>
            <person name="Chen F."/>
            <person name="Li S."/>
            <person name="Ye C."/>
            <person name="Du Z."/>
            <person name="Lin W."/>
            <person name="Wang J."/>
            <person name="Yu J."/>
            <person name="Yang H."/>
            <person name="Wang J."/>
            <person name="Huang P."/>
            <person name="Yang R."/>
        </authorList>
    </citation>
    <scope>NUCLEOTIDE SEQUENCE [LARGE SCALE GENOMIC DNA]</scope>
    <source>
        <strain>91001 / Biovar Mediaevalis</strain>
    </source>
</reference>
<sequence>MKKVLALMVAATLGLSSVAFAADTTATATPAATSTTATVAAQTKATQHQKHKVTKKTTEQKAQAAKKHEKKASVQKTPVQKAQAAKKHVKKASVQKAPVQKAQAAKKHHKTAKKPVAAPAA</sequence>
<gene>
    <name type="primary">asr2</name>
    <name type="synonym">asr</name>
    <name type="ordered locus">YPO2652</name>
    <name type="ordered locus">y1226</name>
    <name type="ordered locus">YP_2454</name>
</gene>
<dbReference type="EMBL" id="AL590842">
    <property type="protein sequence ID" value="CAL21273.1"/>
    <property type="molecule type" value="Genomic_DNA"/>
</dbReference>
<dbReference type="EMBL" id="AE009952">
    <property type="protein sequence ID" value="AAM84801.1"/>
    <property type="status" value="ALT_INIT"/>
    <property type="molecule type" value="Genomic_DNA"/>
</dbReference>
<dbReference type="EMBL" id="AE017042">
    <property type="protein sequence ID" value="AAS62655.1"/>
    <property type="status" value="ALT_INIT"/>
    <property type="molecule type" value="Genomic_DNA"/>
</dbReference>
<dbReference type="PIR" id="AF0323">
    <property type="entry name" value="AF0323"/>
</dbReference>
<dbReference type="RefSeq" id="WP_002212215.1">
    <property type="nucleotide sequence ID" value="NZ_WUCM01000006.1"/>
</dbReference>
<dbReference type="RefSeq" id="YP_002347604.1">
    <property type="nucleotide sequence ID" value="NC_003143.1"/>
</dbReference>
<dbReference type="STRING" id="214092.YPO2652"/>
<dbReference type="PaxDb" id="214092-YPO2652"/>
<dbReference type="GeneID" id="57976040"/>
<dbReference type="KEGG" id="ype:YPO2652"/>
<dbReference type="KEGG" id="ypk:y1226"/>
<dbReference type="PATRIC" id="fig|214092.21.peg.3085"/>
<dbReference type="eggNOG" id="ENOG5032U9T">
    <property type="taxonomic scope" value="Bacteria"/>
</dbReference>
<dbReference type="HOGENOM" id="CLU_102486_1_0_6"/>
<dbReference type="OMA" id="VHHKKQV"/>
<dbReference type="Proteomes" id="UP000000815">
    <property type="component" value="Chromosome"/>
</dbReference>
<dbReference type="Proteomes" id="UP000001019">
    <property type="component" value="Chromosome"/>
</dbReference>
<dbReference type="Proteomes" id="UP000002490">
    <property type="component" value="Chromosome"/>
</dbReference>
<dbReference type="GO" id="GO:0042597">
    <property type="term" value="C:periplasmic space"/>
    <property type="evidence" value="ECO:0007669"/>
    <property type="project" value="UniProtKB-SubCell"/>
</dbReference>
<dbReference type="HAMAP" id="MF_00546">
    <property type="entry name" value="Asr"/>
    <property type="match status" value="1"/>
</dbReference>
<dbReference type="InterPro" id="IPR023497">
    <property type="entry name" value="Acid_shock"/>
</dbReference>
<dbReference type="NCBIfam" id="NF033636">
    <property type="entry name" value="acid_shock_Asr"/>
    <property type="match status" value="1"/>
</dbReference>
<dbReference type="Pfam" id="PF06392">
    <property type="entry name" value="Asr"/>
    <property type="match status" value="1"/>
</dbReference>
<accession>Q8ZDC4</accession>
<accession>Q0WDN4</accession>
<name>ASR2_YERPE</name>
<organism>
    <name type="scientific">Yersinia pestis</name>
    <dbReference type="NCBI Taxonomy" id="632"/>
    <lineage>
        <taxon>Bacteria</taxon>
        <taxon>Pseudomonadati</taxon>
        <taxon>Pseudomonadota</taxon>
        <taxon>Gammaproteobacteria</taxon>
        <taxon>Enterobacterales</taxon>
        <taxon>Yersiniaceae</taxon>
        <taxon>Yersinia</taxon>
    </lineage>
</organism>
<proteinExistence type="inferred from homology"/>
<protein>
    <recommendedName>
        <fullName>Acid shock protein 2</fullName>
    </recommendedName>
</protein>
<comment type="function">
    <text evidence="1">Required for growth and/or survival at acidic conditions.</text>
</comment>
<comment type="subcellular location">
    <subcellularLocation>
        <location evidence="1">Periplasm</location>
    </subcellularLocation>
</comment>
<comment type="PTM">
    <text evidence="1">Proteolytic processing gives rise to the active protein.</text>
</comment>
<comment type="similarity">
    <text evidence="3">Belongs to the Asr family.</text>
</comment>
<comment type="sequence caution" evidence="3">
    <conflict type="erroneous initiation">
        <sequence resource="EMBL-CDS" id="AAM84801"/>
    </conflict>
</comment>
<comment type="sequence caution" evidence="3">
    <conflict type="erroneous initiation">
        <sequence resource="EMBL-CDS" id="AAS62655"/>
    </conflict>
</comment>
<evidence type="ECO:0000250" key="1"/>
<evidence type="ECO:0000256" key="2">
    <source>
        <dbReference type="SAM" id="MobiDB-lite"/>
    </source>
</evidence>
<evidence type="ECO:0000305" key="3"/>
<keyword id="KW-0574">Periplasm</keyword>
<keyword id="KW-1185">Reference proteome</keyword>
<keyword id="KW-0732">Signal</keyword>
<feature type="signal peptide" evidence="1">
    <location>
        <begin position="1"/>
        <end position="21"/>
    </location>
</feature>
<feature type="propeptide" id="PRO_0000269511" evidence="1">
    <location>
        <begin position="22"/>
        <end position="63"/>
    </location>
</feature>
<feature type="chain" id="PRO_0000002411" description="Acid shock protein 2">
    <location>
        <begin position="64"/>
        <end position="121"/>
    </location>
</feature>
<feature type="region of interest" description="Disordered" evidence="2">
    <location>
        <begin position="40"/>
        <end position="121"/>
    </location>
</feature>
<feature type="compositionally biased region" description="Basic residues" evidence="2">
    <location>
        <begin position="84"/>
        <end position="93"/>
    </location>
</feature>
<feature type="compositionally biased region" description="Low complexity" evidence="2">
    <location>
        <begin position="94"/>
        <end position="103"/>
    </location>
</feature>
<feature type="compositionally biased region" description="Basic residues" evidence="2">
    <location>
        <begin position="104"/>
        <end position="113"/>
    </location>
</feature>